<sequence>MENKNHQQENFKSTYQSLVNSARILFVEKGYQAVSIDEISGKALVTKGAFYHHFKNKKQLLSACYKQQLIMIDAYITTKTDLTNGWSALESIFEHYLDYIIDNNKNLIPIQEVMPIIGWNELEKISLEYITGKVNAIVSKLIQENQLKAYDSDVLKNLLNGWFMHIAIHAKNLKELADKKGQFIAIYRGFLLSLKDK</sequence>
<accession>P28815</accession>
<proteinExistence type="evidence at protein level"/>
<reference key="1">
    <citation type="journal article" date="1984" name="J. Bacteriol.">
        <title>Transposon Tn10 contains two structural genes with opposite polarity between tetA and IS10R.</title>
        <authorList>
            <person name="Schollmeier K."/>
            <person name="Hillen W."/>
        </authorList>
    </citation>
    <scope>NUCLEOTIDE SEQUENCE [GENOMIC DNA]</scope>
</reference>
<reference key="2">
    <citation type="journal article" date="1984" name="J. Bacteriol.">
        <title>Identification of additional genes on transposon Tn10: tetC and tetD.</title>
        <authorList>
            <person name="Braus G."/>
            <person name="Argast M."/>
            <person name="Beck C.F."/>
        </authorList>
    </citation>
    <scope>CHARACTERIZATION</scope>
</reference>
<name>TETC_ECOLX</name>
<dbReference type="EMBL" id="J01830">
    <property type="protein sequence ID" value="AAB59095.1"/>
    <property type="molecule type" value="Genomic_DNA"/>
</dbReference>
<dbReference type="SMR" id="P28815"/>
<dbReference type="GO" id="GO:0003677">
    <property type="term" value="F:DNA binding"/>
    <property type="evidence" value="ECO:0007669"/>
    <property type="project" value="UniProtKB-KW"/>
</dbReference>
<dbReference type="Gene3D" id="1.10.357.10">
    <property type="entry name" value="Tetracycline Repressor, domain 2"/>
    <property type="match status" value="1"/>
</dbReference>
<dbReference type="InterPro" id="IPR023772">
    <property type="entry name" value="DNA-bd_HTH_TetR-type_CS"/>
</dbReference>
<dbReference type="InterPro" id="IPR009057">
    <property type="entry name" value="Homeodomain-like_sf"/>
</dbReference>
<dbReference type="InterPro" id="IPR050624">
    <property type="entry name" value="HTH-type_Tx_Regulator"/>
</dbReference>
<dbReference type="InterPro" id="IPR001647">
    <property type="entry name" value="HTH_TetR"/>
</dbReference>
<dbReference type="NCBIfam" id="NF000040">
    <property type="entry name" value="Tn10_TetC"/>
    <property type="match status" value="1"/>
</dbReference>
<dbReference type="PANTHER" id="PTHR43479">
    <property type="entry name" value="ACREF/ENVCD OPERON REPRESSOR-RELATED"/>
    <property type="match status" value="1"/>
</dbReference>
<dbReference type="PANTHER" id="PTHR43479:SF11">
    <property type="entry name" value="ACREF_ENVCD OPERON REPRESSOR-RELATED"/>
    <property type="match status" value="1"/>
</dbReference>
<dbReference type="Pfam" id="PF00440">
    <property type="entry name" value="TetR_N"/>
    <property type="match status" value="1"/>
</dbReference>
<dbReference type="PRINTS" id="PR00455">
    <property type="entry name" value="HTHTETR"/>
</dbReference>
<dbReference type="SUPFAM" id="SSF46689">
    <property type="entry name" value="Homeodomain-like"/>
    <property type="match status" value="1"/>
</dbReference>
<dbReference type="PROSITE" id="PS01081">
    <property type="entry name" value="HTH_TETR_1"/>
    <property type="match status" value="1"/>
</dbReference>
<dbReference type="PROSITE" id="PS50977">
    <property type="entry name" value="HTH_TETR_2"/>
    <property type="match status" value="1"/>
</dbReference>
<evidence type="ECO:0000255" key="1">
    <source>
        <dbReference type="PROSITE-ProRule" id="PRU00335"/>
    </source>
</evidence>
<gene>
    <name type="primary">tetC</name>
</gene>
<protein>
    <recommendedName>
        <fullName>Transposon Tn10 TetC protein</fullName>
    </recommendedName>
    <alternativeName>
        <fullName>ORFL</fullName>
    </alternativeName>
</protein>
<feature type="chain" id="PRO_0000070621" description="Transposon Tn10 TetC protein">
    <location>
        <begin position="1"/>
        <end position="197"/>
    </location>
</feature>
<feature type="domain" description="HTH tetR-type" evidence="1">
    <location>
        <begin position="12"/>
        <end position="72"/>
    </location>
</feature>
<feature type="DNA-binding region" description="H-T-H motif" evidence="1">
    <location>
        <begin position="35"/>
        <end position="54"/>
    </location>
</feature>
<keyword id="KW-0238">DNA-binding</keyword>
<keyword id="KW-0804">Transcription</keyword>
<keyword id="KW-0805">Transcription regulation</keyword>
<keyword id="KW-0814">Transposable element</keyword>
<organism>
    <name type="scientific">Escherichia coli</name>
    <dbReference type="NCBI Taxonomy" id="562"/>
    <lineage>
        <taxon>Bacteria</taxon>
        <taxon>Pseudomonadati</taxon>
        <taxon>Pseudomonadota</taxon>
        <taxon>Gammaproteobacteria</taxon>
        <taxon>Enterobacterales</taxon>
        <taxon>Enterobacteriaceae</taxon>
        <taxon>Escherichia</taxon>
    </lineage>
</organism>